<keyword id="KW-0150">Chloroplast</keyword>
<keyword id="KW-0934">Plastid</keyword>
<keyword id="KW-0687">Ribonucleoprotein</keyword>
<keyword id="KW-0689">Ribosomal protein</keyword>
<accession>Q2QDA6</accession>
<accession>A5J1R7</accession>
<accession>Q4VZQ1</accession>
<organism>
    <name type="scientific">Cucumis sativus</name>
    <name type="common">Cucumber</name>
    <dbReference type="NCBI Taxonomy" id="3659"/>
    <lineage>
        <taxon>Eukaryota</taxon>
        <taxon>Viridiplantae</taxon>
        <taxon>Streptophyta</taxon>
        <taxon>Embryophyta</taxon>
        <taxon>Tracheophyta</taxon>
        <taxon>Spermatophyta</taxon>
        <taxon>Magnoliopsida</taxon>
        <taxon>eudicotyledons</taxon>
        <taxon>Gunneridae</taxon>
        <taxon>Pentapetalae</taxon>
        <taxon>rosids</taxon>
        <taxon>fabids</taxon>
        <taxon>Cucurbitales</taxon>
        <taxon>Cucurbitaceae</taxon>
        <taxon>Benincaseae</taxon>
        <taxon>Cucumis</taxon>
    </lineage>
</organism>
<dbReference type="EMBL" id="DQ119058">
    <property type="protein sequence ID" value="AAZ94634.1"/>
    <property type="molecule type" value="Genomic_DNA"/>
</dbReference>
<dbReference type="EMBL" id="AJ970307">
    <property type="protein sequence ID" value="CAJ00740.1"/>
    <property type="molecule type" value="Genomic_DNA"/>
</dbReference>
<dbReference type="EMBL" id="DQ865975">
    <property type="protein sequence ID" value="ABI97400.1"/>
    <property type="molecule type" value="Genomic_DNA"/>
</dbReference>
<dbReference type="EMBL" id="DQ865976">
    <property type="status" value="NOT_ANNOTATED_CDS"/>
    <property type="molecule type" value="Genomic_DNA"/>
</dbReference>
<dbReference type="RefSeq" id="YP_247581.1">
    <property type="nucleotide sequence ID" value="NC_007144.1"/>
</dbReference>
<dbReference type="SMR" id="Q2QDA6"/>
<dbReference type="GeneID" id="3429310"/>
<dbReference type="KEGG" id="csv:3429310"/>
<dbReference type="OrthoDB" id="407221at2759"/>
<dbReference type="GO" id="GO:0009507">
    <property type="term" value="C:chloroplast"/>
    <property type="evidence" value="ECO:0007669"/>
    <property type="project" value="UniProtKB-SubCell"/>
</dbReference>
<dbReference type="GO" id="GO:1990904">
    <property type="term" value="C:ribonucleoprotein complex"/>
    <property type="evidence" value="ECO:0007669"/>
    <property type="project" value="UniProtKB-KW"/>
</dbReference>
<dbReference type="GO" id="GO:0005840">
    <property type="term" value="C:ribosome"/>
    <property type="evidence" value="ECO:0007669"/>
    <property type="project" value="UniProtKB-KW"/>
</dbReference>
<dbReference type="GO" id="GO:0003735">
    <property type="term" value="F:structural constituent of ribosome"/>
    <property type="evidence" value="ECO:0007669"/>
    <property type="project" value="InterPro"/>
</dbReference>
<dbReference type="GO" id="GO:0006412">
    <property type="term" value="P:translation"/>
    <property type="evidence" value="ECO:0007669"/>
    <property type="project" value="UniProtKB-UniRule"/>
</dbReference>
<dbReference type="FunFam" id="3.30.1320.10:FF:000003">
    <property type="entry name" value="30S ribosomal protein S16, chloroplastic"/>
    <property type="match status" value="1"/>
</dbReference>
<dbReference type="Gene3D" id="3.30.1320.10">
    <property type="match status" value="1"/>
</dbReference>
<dbReference type="HAMAP" id="MF_00385">
    <property type="entry name" value="Ribosomal_bS16"/>
    <property type="match status" value="1"/>
</dbReference>
<dbReference type="InterPro" id="IPR000307">
    <property type="entry name" value="Ribosomal_bS16"/>
</dbReference>
<dbReference type="InterPro" id="IPR020592">
    <property type="entry name" value="Ribosomal_bS16_CS"/>
</dbReference>
<dbReference type="InterPro" id="IPR023803">
    <property type="entry name" value="Ribosomal_bS16_dom_sf"/>
</dbReference>
<dbReference type="NCBIfam" id="TIGR00002">
    <property type="entry name" value="S16"/>
    <property type="match status" value="1"/>
</dbReference>
<dbReference type="PANTHER" id="PTHR12919">
    <property type="entry name" value="30S RIBOSOMAL PROTEIN S16"/>
    <property type="match status" value="1"/>
</dbReference>
<dbReference type="PANTHER" id="PTHR12919:SF20">
    <property type="entry name" value="SMALL RIBOSOMAL SUBUNIT PROTEIN BS16M"/>
    <property type="match status" value="1"/>
</dbReference>
<dbReference type="Pfam" id="PF00886">
    <property type="entry name" value="Ribosomal_S16"/>
    <property type="match status" value="1"/>
</dbReference>
<dbReference type="SUPFAM" id="SSF54565">
    <property type="entry name" value="Ribosomal protein S16"/>
    <property type="match status" value="1"/>
</dbReference>
<dbReference type="PROSITE" id="PS00732">
    <property type="entry name" value="RIBOSOMAL_S16"/>
    <property type="match status" value="1"/>
</dbReference>
<reference key="1">
    <citation type="journal article" date="2006" name="Plant Cell Rep.">
        <title>Complete sequence and organization of the cucumber (Cucumis sativus L. cv. Baekmibaekdadagi) chloroplast genome.</title>
        <authorList>
            <person name="Kim J.-S."/>
            <person name="Jung J.D."/>
            <person name="Lee J.-A."/>
            <person name="Park H.-W."/>
            <person name="Oh K.-H."/>
            <person name="Jeong W.J."/>
            <person name="Choi D.-W."/>
            <person name="Liu J.R."/>
            <person name="Cho K.Y."/>
        </authorList>
    </citation>
    <scope>NUCLEOTIDE SEQUENCE [LARGE SCALE GENOMIC DNA]</scope>
    <source>
        <strain>cv. Baekmibaekdadagi</strain>
    </source>
</reference>
<reference key="2">
    <citation type="journal article" date="2007" name="Cell. Mol. Biol. Lett.">
        <title>The complete structure of the cucumber (Cucumis sativus L.) chloroplast genome: its composition and comparative analysis.</title>
        <authorList>
            <person name="Plader W.W."/>
            <person name="Yukawa Y."/>
            <person name="Sugiura M."/>
            <person name="Malepszy S."/>
        </authorList>
    </citation>
    <scope>NUCLEOTIDE SEQUENCE [LARGE SCALE GENOMIC DNA]</scope>
    <source>
        <strain>cv. Borszczagowski</strain>
    </source>
</reference>
<reference key="3">
    <citation type="journal article" date="2007" name="Genome">
        <title>Sequencing cucumber (Cucumis sativus L.) chloroplast genomes identifies differences between chilling-tolerant and -susceptible cucumber lines.</title>
        <authorList>
            <person name="Chung S.-M."/>
            <person name="Gordon V.S."/>
            <person name="Staub J.E."/>
        </authorList>
    </citation>
    <scope>NUCLEOTIDE SEQUENCE [LARGE SCALE GENOMIC DNA]</scope>
    <source>
        <strain>cv. Chipper</strain>
        <strain>cv. Gy14</strain>
    </source>
</reference>
<evidence type="ECO:0000255" key="1">
    <source>
        <dbReference type="HAMAP-Rule" id="MF_00385"/>
    </source>
</evidence>
<evidence type="ECO:0000305" key="2"/>
<comment type="subcellular location">
    <subcellularLocation>
        <location>Plastid</location>
        <location>Chloroplast</location>
    </subcellularLocation>
</comment>
<comment type="similarity">
    <text evidence="1">Belongs to the bacterial ribosomal protein bS16 family.</text>
</comment>
<geneLocation type="chloroplast"/>
<name>RR16_CUCSA</name>
<feature type="chain" id="PRO_0000276942" description="Small ribosomal subunit protein bS16c">
    <location>
        <begin position="1"/>
        <end position="85"/>
    </location>
</feature>
<feature type="sequence conflict" description="In Ref. 2; CAJ00740." evidence="2" ref="2">
    <location>
        <position position="15"/>
    </location>
</feature>
<protein>
    <recommendedName>
        <fullName evidence="1">Small ribosomal subunit protein bS16c</fullName>
    </recommendedName>
    <alternativeName>
        <fullName evidence="2">30S ribosomal protein S16, chloroplastic</fullName>
    </alternativeName>
</protein>
<proteinExistence type="inferred from homology"/>
<gene>
    <name evidence="1" type="primary">rps16</name>
    <name type="ordered locus">CsCp004</name>
</gene>
<sequence length="85" mass="9854">MVKLRLKRCGRKQRAAVYRIIAIDVRSRREGRDLRKVGFYDPIKNQTYLNVPAILYFLEKGAQPTGTVHDILKKAGVFTELHLNQ</sequence>